<organism evidence="2">
    <name type="scientific">Panurgus calcaratus</name>
    <name type="common">Solitary bee</name>
    <dbReference type="NCBI Taxonomy" id="156354"/>
    <lineage>
        <taxon>Eukaryota</taxon>
        <taxon>Metazoa</taxon>
        <taxon>Ecdysozoa</taxon>
        <taxon>Arthropoda</taxon>
        <taxon>Hexapoda</taxon>
        <taxon>Insecta</taxon>
        <taxon>Pterygota</taxon>
        <taxon>Neoptera</taxon>
        <taxon>Endopterygota</taxon>
        <taxon>Hymenoptera</taxon>
        <taxon>Apocrita</taxon>
        <taxon>Aculeata</taxon>
        <taxon>Apoidea</taxon>
        <taxon>Anthophila</taxon>
        <taxon>Andrenidae</taxon>
        <taxon>Panurginae</taxon>
        <taxon>Panurgini</taxon>
        <taxon>Panurgus</taxon>
    </lineage>
</organism>
<feature type="peptide" id="PRO_0000444566" description="Panurgine K" evidence="1">
    <location>
        <begin position="1"/>
        <end position="25"/>
    </location>
</feature>
<feature type="disulfide bond" evidence="1">
    <location>
        <begin position="8"/>
        <end position="23"/>
    </location>
</feature>
<feature type="disulfide bond" evidence="1">
    <location>
        <begin position="11"/>
        <end position="19"/>
    </location>
</feature>
<evidence type="ECO:0000269" key="1">
    <source>
    </source>
</evidence>
<evidence type="ECO:0000303" key="2">
    <source>
    </source>
</evidence>
<evidence type="ECO:0000305" key="3"/>
<evidence type="ECO:0000305" key="4">
    <source>
    </source>
</evidence>
<comment type="function">
    <text evidence="1">Antimicrobial peptide active against Gram-positive bacteria M.luteus (MIC=1.6 uM) and B.subtilis (MIC=3.3 uM). Less active against Gram-negative bacteria E.coli (MIC=63.3 uM) and yeast C.albicans (MIC=24.2 uM). Not active against S.aureus and P.aeruginosa. Has no hemolytic activity against human erythrocytes. Probably acts by disrupting membranes of target cells.</text>
</comment>
<comment type="subcellular location">
    <subcellularLocation>
        <location evidence="4">Target cell membrane</location>
    </subcellularLocation>
    <subcellularLocation>
        <location evidence="1">Secreted</location>
    </subcellularLocation>
</comment>
<comment type="mass spectrometry"/>
<reference evidence="3" key="1">
    <citation type="journal article" date="2013" name="Amino Acids">
        <title>Panurgines, novel antimicrobial peptides from the venom of communal bee Panurgus calcaratus (Hymenoptera: Andrenidae).</title>
        <authorList>
            <person name="Cujova S."/>
            <person name="Slaninova J."/>
            <person name="Monincova L."/>
            <person name="Fucik V."/>
            <person name="Bednarova L."/>
            <person name="Stokrova J."/>
            <person name="Hovorka O."/>
            <person name="Voburka Z."/>
            <person name="Straka J."/>
            <person name="Cerovsky V."/>
        </authorList>
    </citation>
    <scope>PROTEIN SEQUENCE</scope>
    <scope>FUNCTION</scope>
    <scope>MASS SPECTROMETRY</scope>
    <scope>DISULFIDE BONDS</scope>
    <source>
        <tissue evidence="2">Venom</tissue>
    </source>
</reference>
<name>PNGK_PANCL</name>
<protein>
    <recommendedName>
        <fullName evidence="2">Panurgine K</fullName>
        <shortName evidence="2">PNG-K</shortName>
    </recommendedName>
</protein>
<dbReference type="GO" id="GO:0005576">
    <property type="term" value="C:extracellular region"/>
    <property type="evidence" value="ECO:0007669"/>
    <property type="project" value="UniProtKB-SubCell"/>
</dbReference>
<dbReference type="GO" id="GO:0016020">
    <property type="term" value="C:membrane"/>
    <property type="evidence" value="ECO:0007669"/>
    <property type="project" value="UniProtKB-KW"/>
</dbReference>
<dbReference type="GO" id="GO:0044218">
    <property type="term" value="C:other organism cell membrane"/>
    <property type="evidence" value="ECO:0007669"/>
    <property type="project" value="UniProtKB-KW"/>
</dbReference>
<dbReference type="GO" id="GO:0050832">
    <property type="term" value="P:defense response to fungus"/>
    <property type="evidence" value="ECO:0000314"/>
    <property type="project" value="UniProtKB"/>
</dbReference>
<dbReference type="GO" id="GO:0050829">
    <property type="term" value="P:defense response to Gram-negative bacterium"/>
    <property type="evidence" value="ECO:0000314"/>
    <property type="project" value="UniProtKB"/>
</dbReference>
<dbReference type="GO" id="GO:0050830">
    <property type="term" value="P:defense response to Gram-positive bacterium"/>
    <property type="evidence" value="ECO:0000314"/>
    <property type="project" value="UniProtKB"/>
</dbReference>
<dbReference type="GO" id="GO:0051673">
    <property type="term" value="P:disruption of plasma membrane integrity in another organism"/>
    <property type="evidence" value="ECO:0000314"/>
    <property type="project" value="UniProtKB"/>
</dbReference>
<dbReference type="GO" id="GO:0031640">
    <property type="term" value="P:killing of cells of another organism"/>
    <property type="evidence" value="ECO:0000314"/>
    <property type="project" value="UniProtKB"/>
</dbReference>
<sequence>LDVKKIICVACKIKPNPACKKICPK</sequence>
<proteinExistence type="evidence at protein level"/>
<keyword id="KW-0044">Antibiotic</keyword>
<keyword id="KW-0929">Antimicrobial</keyword>
<keyword id="KW-0903">Direct protein sequencing</keyword>
<keyword id="KW-1015">Disulfide bond</keyword>
<keyword id="KW-0295">Fungicide</keyword>
<keyword id="KW-0472">Membrane</keyword>
<keyword id="KW-0964">Secreted</keyword>
<keyword id="KW-1052">Target cell membrane</keyword>
<keyword id="KW-1053">Target membrane</keyword>
<accession>C0HL85</accession>